<feature type="chain" id="PRO_1000115509" description="Trigger factor">
    <location>
        <begin position="1"/>
        <end position="448"/>
    </location>
</feature>
<feature type="domain" description="PPIase FKBP-type" evidence="1">
    <location>
        <begin position="172"/>
        <end position="257"/>
    </location>
</feature>
<name>TIG_BURCJ</name>
<keyword id="KW-0131">Cell cycle</keyword>
<keyword id="KW-0132">Cell division</keyword>
<keyword id="KW-0143">Chaperone</keyword>
<keyword id="KW-0963">Cytoplasm</keyword>
<keyword id="KW-0413">Isomerase</keyword>
<keyword id="KW-0697">Rotamase</keyword>
<reference key="1">
    <citation type="journal article" date="2009" name="J. Bacteriol.">
        <title>The genome of Burkholderia cenocepacia J2315, an epidemic pathogen of cystic fibrosis patients.</title>
        <authorList>
            <person name="Holden M.T."/>
            <person name="Seth-Smith H.M."/>
            <person name="Crossman L.C."/>
            <person name="Sebaihia M."/>
            <person name="Bentley S.D."/>
            <person name="Cerdeno-Tarraga A.M."/>
            <person name="Thomson N.R."/>
            <person name="Bason N."/>
            <person name="Quail M.A."/>
            <person name="Sharp S."/>
            <person name="Cherevach I."/>
            <person name="Churcher C."/>
            <person name="Goodhead I."/>
            <person name="Hauser H."/>
            <person name="Holroyd N."/>
            <person name="Mungall K."/>
            <person name="Scott P."/>
            <person name="Walker D."/>
            <person name="White B."/>
            <person name="Rose H."/>
            <person name="Iversen P."/>
            <person name="Mil-Homens D."/>
            <person name="Rocha E.P."/>
            <person name="Fialho A.M."/>
            <person name="Baldwin A."/>
            <person name="Dowson C."/>
            <person name="Barrell B.G."/>
            <person name="Govan J.R."/>
            <person name="Vandamme P."/>
            <person name="Hart C.A."/>
            <person name="Mahenthiralingam E."/>
            <person name="Parkhill J."/>
        </authorList>
    </citation>
    <scope>NUCLEOTIDE SEQUENCE [LARGE SCALE GENOMIC DNA]</scope>
    <source>
        <strain>ATCC BAA-245 / DSM 16553 / LMG 16656 / NCTC 13227 / J2315 / CF5610</strain>
    </source>
</reference>
<proteinExistence type="inferred from homology"/>
<organism>
    <name type="scientific">Burkholderia cenocepacia (strain ATCC BAA-245 / DSM 16553 / LMG 16656 / NCTC 13227 / J2315 / CF5610)</name>
    <name type="common">Burkholderia cepacia (strain J2315)</name>
    <dbReference type="NCBI Taxonomy" id="216591"/>
    <lineage>
        <taxon>Bacteria</taxon>
        <taxon>Pseudomonadati</taxon>
        <taxon>Pseudomonadota</taxon>
        <taxon>Betaproteobacteria</taxon>
        <taxon>Burkholderiales</taxon>
        <taxon>Burkholderiaceae</taxon>
        <taxon>Burkholderia</taxon>
        <taxon>Burkholderia cepacia complex</taxon>
    </lineage>
</organism>
<sequence>MANVVENLGKLERRVTISLPKDTVQKEIDARIQKLAKNVRMPGFRPGKVPLKMVAQQYSGQVEAEVLSDKIGQEFFTISRAENLRVAGQPSFEPKQEQAEDAYAFDATFEVYPEVKIGDLATAEVERSTTTIGDAEIDRTLDILRKQRVHFHARGEAGEHGDGGADTAAKNGDRVTVDFVGKIDDVAFQGGTAEDFPFVLGEGRMLPEFETAALGLKVGEQRTFDLKFPDDYHGKDVAGKTAQFTVTMKKIEWPHLPEIDAEFAKSLGIEDGDLTKMRAEIKENLEREAKRRTQSIVKNQVMDALLKISELDVPKALIEQDQQRLVEMARQDLAQRGVPNAKDAPIPAEMFAEQAERRVKLGLVLAELVKANGLEAKPEQIRAEVDEFAKSYEDPKEVVRWYYSNQQRLAEMEAFVVESNVVDFVLGKAKVTDKEVSFEALASASAQA</sequence>
<protein>
    <recommendedName>
        <fullName evidence="1">Trigger factor</fullName>
        <shortName evidence="1">TF</shortName>
        <ecNumber evidence="1">5.2.1.8</ecNumber>
    </recommendedName>
    <alternativeName>
        <fullName evidence="1">PPIase</fullName>
    </alternativeName>
</protein>
<evidence type="ECO:0000255" key="1">
    <source>
        <dbReference type="HAMAP-Rule" id="MF_00303"/>
    </source>
</evidence>
<accession>B4EBM4</accession>
<gene>
    <name evidence="1" type="primary">tig</name>
    <name type="ordered locus">BceJ2315_19600</name>
    <name type="ORF">BCAL1997</name>
</gene>
<comment type="function">
    <text evidence="1">Involved in protein export. Acts as a chaperone by maintaining the newly synthesized protein in an open conformation. Functions as a peptidyl-prolyl cis-trans isomerase.</text>
</comment>
<comment type="catalytic activity">
    <reaction evidence="1">
        <text>[protein]-peptidylproline (omega=180) = [protein]-peptidylproline (omega=0)</text>
        <dbReference type="Rhea" id="RHEA:16237"/>
        <dbReference type="Rhea" id="RHEA-COMP:10747"/>
        <dbReference type="Rhea" id="RHEA-COMP:10748"/>
        <dbReference type="ChEBI" id="CHEBI:83833"/>
        <dbReference type="ChEBI" id="CHEBI:83834"/>
        <dbReference type="EC" id="5.2.1.8"/>
    </reaction>
</comment>
<comment type="subcellular location">
    <subcellularLocation>
        <location>Cytoplasm</location>
    </subcellularLocation>
    <text evidence="1">About half TF is bound to the ribosome near the polypeptide exit tunnel while the other half is free in the cytoplasm.</text>
</comment>
<comment type="domain">
    <text evidence="1">Consists of 3 domains; the N-terminus binds the ribosome, the middle domain has PPIase activity, while the C-terminus has intrinsic chaperone activity on its own.</text>
</comment>
<comment type="similarity">
    <text evidence="1">Belongs to the FKBP-type PPIase family. Tig subfamily.</text>
</comment>
<dbReference type="EC" id="5.2.1.8" evidence="1"/>
<dbReference type="EMBL" id="AM747720">
    <property type="protein sequence ID" value="CAR52297.1"/>
    <property type="molecule type" value="Genomic_DNA"/>
</dbReference>
<dbReference type="RefSeq" id="WP_006489335.1">
    <property type="nucleotide sequence ID" value="NC_011000.1"/>
</dbReference>
<dbReference type="SMR" id="B4EBM4"/>
<dbReference type="GeneID" id="56558478"/>
<dbReference type="KEGG" id="bcj:BCAL1997"/>
<dbReference type="eggNOG" id="COG0544">
    <property type="taxonomic scope" value="Bacteria"/>
</dbReference>
<dbReference type="HOGENOM" id="CLU_033058_2_0_4"/>
<dbReference type="BioCyc" id="BCEN216591:G1G1V-2192-MONOMER"/>
<dbReference type="Proteomes" id="UP000001035">
    <property type="component" value="Chromosome 1"/>
</dbReference>
<dbReference type="GO" id="GO:0005737">
    <property type="term" value="C:cytoplasm"/>
    <property type="evidence" value="ECO:0007669"/>
    <property type="project" value="UniProtKB-SubCell"/>
</dbReference>
<dbReference type="GO" id="GO:0003755">
    <property type="term" value="F:peptidyl-prolyl cis-trans isomerase activity"/>
    <property type="evidence" value="ECO:0007669"/>
    <property type="project" value="UniProtKB-UniRule"/>
</dbReference>
<dbReference type="GO" id="GO:0044183">
    <property type="term" value="F:protein folding chaperone"/>
    <property type="evidence" value="ECO:0007669"/>
    <property type="project" value="TreeGrafter"/>
</dbReference>
<dbReference type="GO" id="GO:0043022">
    <property type="term" value="F:ribosome binding"/>
    <property type="evidence" value="ECO:0007669"/>
    <property type="project" value="TreeGrafter"/>
</dbReference>
<dbReference type="GO" id="GO:0051083">
    <property type="term" value="P:'de novo' cotranslational protein folding"/>
    <property type="evidence" value="ECO:0007669"/>
    <property type="project" value="TreeGrafter"/>
</dbReference>
<dbReference type="GO" id="GO:0051301">
    <property type="term" value="P:cell division"/>
    <property type="evidence" value="ECO:0007669"/>
    <property type="project" value="UniProtKB-KW"/>
</dbReference>
<dbReference type="GO" id="GO:0061077">
    <property type="term" value="P:chaperone-mediated protein folding"/>
    <property type="evidence" value="ECO:0007669"/>
    <property type="project" value="TreeGrafter"/>
</dbReference>
<dbReference type="GO" id="GO:0015031">
    <property type="term" value="P:protein transport"/>
    <property type="evidence" value="ECO:0007669"/>
    <property type="project" value="UniProtKB-UniRule"/>
</dbReference>
<dbReference type="GO" id="GO:0043335">
    <property type="term" value="P:protein unfolding"/>
    <property type="evidence" value="ECO:0007669"/>
    <property type="project" value="TreeGrafter"/>
</dbReference>
<dbReference type="FunFam" id="3.10.50.40:FF:000001">
    <property type="entry name" value="Trigger factor"/>
    <property type="match status" value="1"/>
</dbReference>
<dbReference type="Gene3D" id="3.10.50.40">
    <property type="match status" value="1"/>
</dbReference>
<dbReference type="Gene3D" id="3.30.70.1050">
    <property type="entry name" value="Trigger factor ribosome-binding domain"/>
    <property type="match status" value="1"/>
</dbReference>
<dbReference type="Gene3D" id="1.10.3120.10">
    <property type="entry name" value="Trigger factor, C-terminal domain"/>
    <property type="match status" value="1"/>
</dbReference>
<dbReference type="HAMAP" id="MF_00303">
    <property type="entry name" value="Trigger_factor_Tig"/>
    <property type="match status" value="1"/>
</dbReference>
<dbReference type="InterPro" id="IPR046357">
    <property type="entry name" value="PPIase_dom_sf"/>
</dbReference>
<dbReference type="InterPro" id="IPR001179">
    <property type="entry name" value="PPIase_FKBP_dom"/>
</dbReference>
<dbReference type="InterPro" id="IPR005215">
    <property type="entry name" value="Trig_fac"/>
</dbReference>
<dbReference type="InterPro" id="IPR008880">
    <property type="entry name" value="Trigger_fac_C"/>
</dbReference>
<dbReference type="InterPro" id="IPR037041">
    <property type="entry name" value="Trigger_fac_C_sf"/>
</dbReference>
<dbReference type="InterPro" id="IPR008881">
    <property type="entry name" value="Trigger_fac_ribosome-bd_bac"/>
</dbReference>
<dbReference type="InterPro" id="IPR036611">
    <property type="entry name" value="Trigger_fac_ribosome-bd_sf"/>
</dbReference>
<dbReference type="InterPro" id="IPR027304">
    <property type="entry name" value="Trigger_fact/SurA_dom_sf"/>
</dbReference>
<dbReference type="NCBIfam" id="TIGR00115">
    <property type="entry name" value="tig"/>
    <property type="match status" value="1"/>
</dbReference>
<dbReference type="PANTHER" id="PTHR30560">
    <property type="entry name" value="TRIGGER FACTOR CHAPERONE AND PEPTIDYL-PROLYL CIS/TRANS ISOMERASE"/>
    <property type="match status" value="1"/>
</dbReference>
<dbReference type="PANTHER" id="PTHR30560:SF3">
    <property type="entry name" value="TRIGGER FACTOR-LIKE PROTEIN TIG, CHLOROPLASTIC"/>
    <property type="match status" value="1"/>
</dbReference>
<dbReference type="Pfam" id="PF00254">
    <property type="entry name" value="FKBP_C"/>
    <property type="match status" value="1"/>
</dbReference>
<dbReference type="Pfam" id="PF05698">
    <property type="entry name" value="Trigger_C"/>
    <property type="match status" value="1"/>
</dbReference>
<dbReference type="Pfam" id="PF05697">
    <property type="entry name" value="Trigger_N"/>
    <property type="match status" value="1"/>
</dbReference>
<dbReference type="PIRSF" id="PIRSF003095">
    <property type="entry name" value="Trigger_factor"/>
    <property type="match status" value="1"/>
</dbReference>
<dbReference type="SUPFAM" id="SSF54534">
    <property type="entry name" value="FKBP-like"/>
    <property type="match status" value="1"/>
</dbReference>
<dbReference type="SUPFAM" id="SSF109998">
    <property type="entry name" value="Triger factor/SurA peptide-binding domain-like"/>
    <property type="match status" value="1"/>
</dbReference>
<dbReference type="SUPFAM" id="SSF102735">
    <property type="entry name" value="Trigger factor ribosome-binding domain"/>
    <property type="match status" value="1"/>
</dbReference>
<dbReference type="PROSITE" id="PS50059">
    <property type="entry name" value="FKBP_PPIASE"/>
    <property type="match status" value="1"/>
</dbReference>